<comment type="function">
    <text evidence="5">Cytochrome P450 of the CYP74A subfamily involved in the biosynthesis of jasmonic acid from lipoxygenase-derived hydroperoxides of free fatty acids. Catalyzes the synthesis of unstable allene oxide, which is further converted spontaneously by hydrolysis or cyclization. Can use 13S-hydroperoxy-9(Z),11(E),15(Z)-octadecatrienoic acid (13-HPOT) and 13S-hydroperoxy-9(Z),11(E)-octadecadienoic acid (13-HPOD) as substrates.</text>
</comment>
<comment type="catalytic activity">
    <reaction evidence="5">
        <text>(13S)-hydroperoxy-(9Z,11E,15Z)-octadecatrienoate = (9Z,13S,15Z)-12,13-epoxyoctadeca-9,11,15-trienoate + H2O</text>
        <dbReference type="Rhea" id="RHEA:25074"/>
        <dbReference type="ChEBI" id="CHEBI:15377"/>
        <dbReference type="ChEBI" id="CHEBI:36438"/>
        <dbReference type="ChEBI" id="CHEBI:58757"/>
        <dbReference type="EC" id="4.2.1.92"/>
    </reaction>
    <physiologicalReaction direction="left-to-right" evidence="9">
        <dbReference type="Rhea" id="RHEA:25075"/>
    </physiologicalReaction>
</comment>
<comment type="catalytic activity">
    <reaction evidence="5">
        <text>(13S)-hydroperoxy-(9Z,11E)-octadecadienoate = (9Z,13S)-12,13-epoxyoctadeca-9,11-dienoate + H2O</text>
        <dbReference type="Rhea" id="RHEA:84075"/>
        <dbReference type="ChEBI" id="CHEBI:15377"/>
        <dbReference type="ChEBI" id="CHEBI:57465"/>
        <dbReference type="ChEBI" id="CHEBI:57466"/>
    </reaction>
    <physiologicalReaction direction="left-to-right" evidence="9">
        <dbReference type="Rhea" id="RHEA:84076"/>
    </physiologicalReaction>
</comment>
<comment type="cofactor">
    <cofactor evidence="2">
        <name>heme b</name>
        <dbReference type="ChEBI" id="CHEBI:60344"/>
    </cofactor>
</comment>
<comment type="subcellular location">
    <subcellularLocation>
        <location evidence="3">Plastid</location>
        <location evidence="3">Chloroplast</location>
    </subcellularLocation>
</comment>
<comment type="tissue specificity">
    <text evidence="5">Expressed in flowers. Detected in stems and roots, but not in leaves and fruits under non-inducing conditions.</text>
</comment>
<comment type="induction">
    <text evidence="5">Up-regulated by wounding, elicitors, methyl jasmonate or 12-oxophytodienoic acid (PDA).</text>
</comment>
<comment type="similarity">
    <text evidence="8">Belongs to the cytochrome P450 family.</text>
</comment>
<sequence>MASTSLSLPSLKLQFPSHTSSSSRKNSSSYRVSIRPIQASVSEIPPYISSPSQSPSSSSSPPVKQAKLPAQKVPGDYGLPLVGPWKDRLDYFYNQGKNEFFKSRIQKHQSTVFRTNMPPGPFISFNPNVVVLLDGKSFPVLFDVSKVEKKDLFTGTFMPSTDLTGGYRVLSYLDPSEPNHAKLKKLMFYLLSSRRNEVIPEFHNSYSELFETLENELSTKGKAGLNAANDQAAFNFLARSLYGINPQDTELGTDGPKLIGKWVLFQLHPLLILGLPKVLEDLVMHTFRLPPALVKKDYQRLYNFFYENSTSVLDEAEKIGISREEACHNLLFATCFNSFGGIKIFFPNMLKWIGRAGAKLHSQLAQEIRSVISSNSGKVTMAAMEKMPLMKSVVYESLRIEPPVASQYGRAKHDMVIESHDASFEIKEGELLYGYQPFATKDPKIFDRSEEFVADRFIGEEGEKLLKHVLWSNGSETENASINNKQCAGKDFVVLVSRLLLVELFLRYDSFEIEVGASPLGAAITLTSLRRASF</sequence>
<accession>K4BV52</accession>
<accession>Q9M464</accession>
<protein>
    <recommendedName>
        <fullName evidence="7">Allene oxide synthase 1, chloroplastic</fullName>
        <shortName evidence="7">LeAOS1</shortName>
        <ecNumber evidence="5">4.2.1.92</ecNumber>
    </recommendedName>
    <alternativeName>
        <fullName evidence="8">Cytochrome P450 74A</fullName>
    </alternativeName>
    <alternativeName>
        <fullName evidence="6">Hydroperoxide dehydratase</fullName>
    </alternativeName>
</protein>
<proteinExistence type="evidence at protein level"/>
<keyword id="KW-0150">Chloroplast</keyword>
<keyword id="KW-0275">Fatty acid biosynthesis</keyword>
<keyword id="KW-0276">Fatty acid metabolism</keyword>
<keyword id="KW-0349">Heme</keyword>
<keyword id="KW-0408">Iron</keyword>
<keyword id="KW-0444">Lipid biosynthesis</keyword>
<keyword id="KW-0443">Lipid metabolism</keyword>
<keyword id="KW-0456">Lyase</keyword>
<keyword id="KW-0479">Metal-binding</keyword>
<keyword id="KW-0925">Oxylipin biosynthesis</keyword>
<keyword id="KW-0611">Plant defense</keyword>
<keyword id="KW-0934">Plastid</keyword>
<keyword id="KW-1185">Reference proteome</keyword>
<keyword id="KW-0809">Transit peptide</keyword>
<name>AOS1_SOLLC</name>
<organism evidence="10">
    <name type="scientific">Solanum lycopersicum</name>
    <name type="common">Tomato</name>
    <name type="synonym">Lycopersicon esculentum</name>
    <dbReference type="NCBI Taxonomy" id="4081"/>
    <lineage>
        <taxon>Eukaryota</taxon>
        <taxon>Viridiplantae</taxon>
        <taxon>Streptophyta</taxon>
        <taxon>Embryophyta</taxon>
        <taxon>Tracheophyta</taxon>
        <taxon>Spermatophyta</taxon>
        <taxon>Magnoliopsida</taxon>
        <taxon>eudicotyledons</taxon>
        <taxon>Gunneridae</taxon>
        <taxon>Pentapetalae</taxon>
        <taxon>asterids</taxon>
        <taxon>lamiids</taxon>
        <taxon>Solanales</taxon>
        <taxon>Solanaceae</taxon>
        <taxon>Solanoideae</taxon>
        <taxon>Solaneae</taxon>
        <taxon>Solanum</taxon>
        <taxon>Solanum subgen. Lycopersicon</taxon>
    </lineage>
</organism>
<gene>
    <name evidence="7" type="primary">AOS1</name>
    <name type="ordered locus">Solyc04g079730</name>
</gene>
<dbReference type="EC" id="4.2.1.92" evidence="5"/>
<dbReference type="EMBL" id="AJ271093">
    <property type="protein sequence ID" value="CAB88032.1"/>
    <property type="molecule type" value="mRNA"/>
</dbReference>
<dbReference type="RefSeq" id="NP_001234833.2">
    <property type="nucleotide sequence ID" value="NM_001247904.2"/>
</dbReference>
<dbReference type="SMR" id="K4BV52"/>
<dbReference type="FunCoup" id="K4BV52">
    <property type="interactions" value="543"/>
</dbReference>
<dbReference type="STRING" id="4081.K4BV52"/>
<dbReference type="PaxDb" id="4081-Solyc04g079730.1.1"/>
<dbReference type="EnsemblPlants" id="Solyc04g079730.1.1">
    <property type="protein sequence ID" value="Solyc04g079730.1.1.1"/>
    <property type="gene ID" value="Solyc04g079730.1"/>
</dbReference>
<dbReference type="GeneID" id="606711"/>
<dbReference type="Gramene" id="Solyc04g079730.1.1">
    <property type="protein sequence ID" value="Solyc04g079730.1.1.1"/>
    <property type="gene ID" value="Solyc04g079730.1"/>
</dbReference>
<dbReference type="KEGG" id="sly:606711"/>
<dbReference type="eggNOG" id="ENOG502QQNS">
    <property type="taxonomic scope" value="Eukaryota"/>
</dbReference>
<dbReference type="HOGENOM" id="CLU_045757_0_0_1"/>
<dbReference type="InParanoid" id="K4BV52"/>
<dbReference type="OMA" id="DFGHYND"/>
<dbReference type="OrthoDB" id="2789670at2759"/>
<dbReference type="PhylomeDB" id="K4BV52"/>
<dbReference type="Proteomes" id="UP000004994">
    <property type="component" value="Chromosome 4"/>
</dbReference>
<dbReference type="GO" id="GO:0009507">
    <property type="term" value="C:chloroplast"/>
    <property type="evidence" value="ECO:0007669"/>
    <property type="project" value="UniProtKB-SubCell"/>
</dbReference>
<dbReference type="GO" id="GO:0009978">
    <property type="term" value="F:allene oxide synthase activity"/>
    <property type="evidence" value="ECO:0007669"/>
    <property type="project" value="UniProtKB-EC"/>
</dbReference>
<dbReference type="GO" id="GO:0020037">
    <property type="term" value="F:heme binding"/>
    <property type="evidence" value="ECO:0007669"/>
    <property type="project" value="InterPro"/>
</dbReference>
<dbReference type="GO" id="GO:0005506">
    <property type="term" value="F:iron ion binding"/>
    <property type="evidence" value="ECO:0007669"/>
    <property type="project" value="InterPro"/>
</dbReference>
<dbReference type="GO" id="GO:0004497">
    <property type="term" value="F:monooxygenase activity"/>
    <property type="evidence" value="ECO:0000318"/>
    <property type="project" value="GO_Central"/>
</dbReference>
<dbReference type="GO" id="GO:0016705">
    <property type="term" value="F:oxidoreductase activity, acting on paired donors, with incorporation or reduction of molecular oxygen"/>
    <property type="evidence" value="ECO:0007669"/>
    <property type="project" value="InterPro"/>
</dbReference>
<dbReference type="GO" id="GO:0006952">
    <property type="term" value="P:defense response"/>
    <property type="evidence" value="ECO:0007669"/>
    <property type="project" value="UniProtKB-KW"/>
</dbReference>
<dbReference type="GO" id="GO:0009695">
    <property type="term" value="P:jasmonic acid biosynthetic process"/>
    <property type="evidence" value="ECO:0000318"/>
    <property type="project" value="GO_Central"/>
</dbReference>
<dbReference type="GO" id="GO:0031408">
    <property type="term" value="P:oxylipin biosynthetic process"/>
    <property type="evidence" value="ECO:0007669"/>
    <property type="project" value="UniProtKB-KW"/>
</dbReference>
<dbReference type="CDD" id="cd11071">
    <property type="entry name" value="CYP74"/>
    <property type="match status" value="1"/>
</dbReference>
<dbReference type="FunFam" id="1.10.630.10:FF:000024">
    <property type="entry name" value="Allene oxide synthase, chloroplastic"/>
    <property type="match status" value="1"/>
</dbReference>
<dbReference type="Gene3D" id="1.10.630.10">
    <property type="entry name" value="Cytochrome P450"/>
    <property type="match status" value="1"/>
</dbReference>
<dbReference type="InterPro" id="IPR001128">
    <property type="entry name" value="Cyt_P450"/>
</dbReference>
<dbReference type="InterPro" id="IPR002403">
    <property type="entry name" value="Cyt_P450_E_grp-IV"/>
</dbReference>
<dbReference type="InterPro" id="IPR036396">
    <property type="entry name" value="Cyt_P450_sf"/>
</dbReference>
<dbReference type="PANTHER" id="PTHR24286:SF255">
    <property type="entry name" value="ALLENE OXIDE SYNTHASE, CHLOROPLASTIC"/>
    <property type="match status" value="1"/>
</dbReference>
<dbReference type="PANTHER" id="PTHR24286">
    <property type="entry name" value="CYTOCHROME P450 26"/>
    <property type="match status" value="1"/>
</dbReference>
<dbReference type="Pfam" id="PF00067">
    <property type="entry name" value="p450"/>
    <property type="match status" value="1"/>
</dbReference>
<dbReference type="PRINTS" id="PR00465">
    <property type="entry name" value="EP450IV"/>
</dbReference>
<dbReference type="SUPFAM" id="SSF48264">
    <property type="entry name" value="Cytochrome P450"/>
    <property type="match status" value="1"/>
</dbReference>
<reference key="1">
    <citation type="journal article" date="2000" name="Plant Physiol.">
        <title>Expression of allene oxide synthase determines defense gene activation in tomato.</title>
        <authorList>
            <person name="Sivasankar S."/>
            <person name="Sheldrick B."/>
            <person name="Rothstein S.J."/>
        </authorList>
    </citation>
    <scope>NUCLEOTIDE SEQUENCE [MRNA]</scope>
    <scope>FUNCTION</scope>
    <scope>CATALYTIC ACTIVITY</scope>
    <scope>TISSUE SPECIFICITY</scope>
    <scope>INDUCTION</scope>
    <source>
        <strain>cv. Bonny Best</strain>
    </source>
</reference>
<reference key="2">
    <citation type="journal article" date="2012" name="Nature">
        <title>The tomato genome sequence provides insights into fleshy fruit evolution.</title>
        <authorList>
            <consortium name="Tomato Genome Consortium"/>
        </authorList>
    </citation>
    <scope>NUCLEOTIDE SEQUENCE [LARGE SCALE GENOMIC DNA]</scope>
    <source>
        <strain>cv. Heinz 1706</strain>
    </source>
</reference>
<reference key="3">
    <citation type="journal article" date="2002" name="J. Biol. Chem.">
        <title>Identification of a jasmonate-regulated allene oxide synthase that metabolizes 9-hydroperoxides of linoleic and linolenic acids.</title>
        <authorList>
            <person name="Itoh A."/>
            <person name="Schilmiller A.L."/>
            <person name="McCaig B.C."/>
            <person name="Howe G.A."/>
        </authorList>
    </citation>
    <scope>GENE FAMILY</scope>
    <scope>NOMENCLATURE</scope>
</reference>
<evidence type="ECO:0000250" key="1">
    <source>
        <dbReference type="UniProtKB" id="Q40778"/>
    </source>
</evidence>
<evidence type="ECO:0000250" key="2">
    <source>
        <dbReference type="UniProtKB" id="Q96242"/>
    </source>
</evidence>
<evidence type="ECO:0000255" key="3"/>
<evidence type="ECO:0000256" key="4">
    <source>
        <dbReference type="SAM" id="MobiDB-lite"/>
    </source>
</evidence>
<evidence type="ECO:0000269" key="5">
    <source>
    </source>
</evidence>
<evidence type="ECO:0000303" key="6">
    <source>
    </source>
</evidence>
<evidence type="ECO:0000303" key="7">
    <source>
    </source>
</evidence>
<evidence type="ECO:0000305" key="8"/>
<evidence type="ECO:0000305" key="9">
    <source>
    </source>
</evidence>
<evidence type="ECO:0000312" key="10">
    <source>
        <dbReference type="Proteomes" id="UP000004994"/>
    </source>
</evidence>
<feature type="transit peptide" description="Chloroplast" evidence="3">
    <location>
        <begin position="1"/>
        <end position="69"/>
    </location>
</feature>
<feature type="chain" id="PRO_0000436190" description="Allene oxide synthase 1, chloroplastic" evidence="3">
    <location>
        <begin position="70"/>
        <end position="534"/>
    </location>
</feature>
<feature type="region of interest" description="Disordered" evidence="4">
    <location>
        <begin position="1"/>
        <end position="31"/>
    </location>
</feature>
<feature type="region of interest" description="Disordered" evidence="4">
    <location>
        <begin position="43"/>
        <end position="71"/>
    </location>
</feature>
<feature type="compositionally biased region" description="Low complexity" evidence="4">
    <location>
        <begin position="17"/>
        <end position="31"/>
    </location>
</feature>
<feature type="compositionally biased region" description="Low complexity" evidence="4">
    <location>
        <begin position="43"/>
        <end position="62"/>
    </location>
</feature>
<feature type="binding site" evidence="2">
    <location>
        <position position="149"/>
    </location>
    <ligand>
        <name>heme b</name>
        <dbReference type="ChEBI" id="CHEBI:60344"/>
    </ligand>
</feature>
<feature type="binding site" evidence="2">
    <location>
        <position position="180"/>
    </location>
    <ligand>
        <name>heme b</name>
        <dbReference type="ChEBI" id="CHEBI:60344"/>
    </ligand>
</feature>
<feature type="binding site" evidence="2">
    <location>
        <position position="184"/>
    </location>
    <ligand>
        <name>heme b</name>
        <dbReference type="ChEBI" id="CHEBI:60344"/>
    </ligand>
</feature>
<feature type="binding site" evidence="2">
    <location>
        <position position="337"/>
    </location>
    <ligand>
        <name>(13S)-hydroperoxy-(9Z,11E)-octadecadienoate</name>
        <dbReference type="ChEBI" id="CHEBI:57466"/>
    </ligand>
</feature>
<feature type="binding site" evidence="2">
    <location>
        <position position="337"/>
    </location>
    <ligand>
        <name>(13S)-hydroperoxy-(9Z,11E,15Z)-octadecatrienoate</name>
        <dbReference type="ChEBI" id="CHEBI:58757"/>
    </ligand>
</feature>
<feature type="binding site" evidence="1">
    <location>
        <position position="343"/>
    </location>
    <ligand>
        <name>(13S)-hydroperoxy-(9Z,11E)-octadecadienoate</name>
        <dbReference type="ChEBI" id="CHEBI:57466"/>
    </ligand>
</feature>
<feature type="binding site" evidence="2">
    <location>
        <position position="485"/>
    </location>
    <ligand>
        <name>heme b</name>
        <dbReference type="ChEBI" id="CHEBI:60344"/>
    </ligand>
</feature>
<feature type="binding site" description="axial binding residue" evidence="2">
    <location>
        <position position="487"/>
    </location>
    <ligand>
        <name>heme b</name>
        <dbReference type="ChEBI" id="CHEBI:60344"/>
    </ligand>
    <ligandPart>
        <name>Fe</name>
        <dbReference type="ChEBI" id="CHEBI:18248"/>
    </ligandPart>
</feature>
<feature type="sequence conflict" description="In Ref. 1; CAB88032." evidence="8" ref="1">
    <original>G</original>
    <variation>A</variation>
    <location>
        <position position="78"/>
    </location>
</feature>
<feature type="sequence conflict" description="In Ref. 1; CAB88032." evidence="8" ref="1">
    <original>F</original>
    <variation>V</variation>
    <location>
        <position position="234"/>
    </location>
</feature>
<feature type="sequence conflict" description="In Ref. 1; CAB88032." evidence="8" ref="1">
    <original>I</original>
    <variation>K</variation>
    <location>
        <position position="458"/>
    </location>
</feature>